<keyword id="KW-0002">3D-structure</keyword>
<keyword id="KW-0963">Cytoplasm</keyword>
<keyword id="KW-1185">Reference proteome</keyword>
<keyword id="KW-0687">Ribonucleoprotein</keyword>
<keyword id="KW-0689">Ribosomal protein</keyword>
<organism>
    <name type="scientific">Schizosaccharomyces pombe (strain 972 / ATCC 24843)</name>
    <name type="common">Fission yeast</name>
    <dbReference type="NCBI Taxonomy" id="284812"/>
    <lineage>
        <taxon>Eukaryota</taxon>
        <taxon>Fungi</taxon>
        <taxon>Dikarya</taxon>
        <taxon>Ascomycota</taxon>
        <taxon>Taphrinomycotina</taxon>
        <taxon>Schizosaccharomycetes</taxon>
        <taxon>Schizosaccharomycetales</taxon>
        <taxon>Schizosaccharomycetaceae</taxon>
        <taxon>Schizosaccharomyces</taxon>
    </lineage>
</organism>
<dbReference type="EMBL" id="CU329671">
    <property type="protein sequence ID" value="CAA17057.2"/>
    <property type="molecule type" value="Genomic_DNA"/>
</dbReference>
<dbReference type="PIR" id="T39834">
    <property type="entry name" value="T39834"/>
</dbReference>
<dbReference type="RefSeq" id="NP_595969.1">
    <property type="nucleotide sequence ID" value="NM_001021877.2"/>
</dbReference>
<dbReference type="PDB" id="9AXT">
    <property type="method" value="EM"/>
    <property type="resolution" value="2.40 A"/>
    <property type="chains" value="Ak=1-61"/>
</dbReference>
<dbReference type="PDB" id="9AXV">
    <property type="method" value="EM"/>
    <property type="resolution" value="2.40 A"/>
    <property type="chains" value="Ak=1-61"/>
</dbReference>
<dbReference type="PDBsum" id="9AXT"/>
<dbReference type="PDBsum" id="9AXV"/>
<dbReference type="EMDB" id="EMD-43972"/>
<dbReference type="EMDB" id="EMD-43976"/>
<dbReference type="SMR" id="P0CT63"/>
<dbReference type="FunCoup" id="P0CT63">
    <property type="interactions" value="240"/>
</dbReference>
<dbReference type="STRING" id="284812.P0CT63"/>
<dbReference type="iPTMnet" id="P0CT63"/>
<dbReference type="EnsemblFungi" id="SPAC19B12.04.1">
    <property type="protein sequence ID" value="SPAC19B12.04.1:pep"/>
    <property type="gene ID" value="SPAC19B12.04"/>
</dbReference>
<dbReference type="EnsemblFungi" id="SPBC19G7.03c.1">
    <property type="protein sequence ID" value="SPBC19G7.03c.1:pep"/>
    <property type="gene ID" value="SPBC19G7.03c"/>
</dbReference>
<dbReference type="GeneID" id="2540609"/>
<dbReference type="KEGG" id="spo:2540609"/>
<dbReference type="KEGG" id="spo:2542603"/>
<dbReference type="PomBase" id="SPBC19G7.03c">
    <property type="gene designation" value="rps3002"/>
</dbReference>
<dbReference type="VEuPathDB" id="FungiDB:SPAC19B12.04"/>
<dbReference type="VEuPathDB" id="FungiDB:SPBC19G7.03c"/>
<dbReference type="InParanoid" id="P0CT63"/>
<dbReference type="OMA" id="YNTQNVP"/>
<dbReference type="PhylomeDB" id="P0CT63"/>
<dbReference type="PRO" id="PR:P0CT63"/>
<dbReference type="Proteomes" id="UP000002485">
    <property type="component" value="Chromosome II"/>
</dbReference>
<dbReference type="ExpressionAtlas" id="P0CT63">
    <property type="expression patterns" value="differential"/>
</dbReference>
<dbReference type="GO" id="GO:0005829">
    <property type="term" value="C:cytosol"/>
    <property type="evidence" value="ECO:0007005"/>
    <property type="project" value="PomBase"/>
</dbReference>
<dbReference type="GO" id="GO:0022627">
    <property type="term" value="C:cytosolic small ribosomal subunit"/>
    <property type="evidence" value="ECO:0000269"/>
    <property type="project" value="PomBase"/>
</dbReference>
<dbReference type="GO" id="GO:0003735">
    <property type="term" value="F:structural constituent of ribosome"/>
    <property type="evidence" value="ECO:0000266"/>
    <property type="project" value="PomBase"/>
</dbReference>
<dbReference type="GO" id="GO:0002181">
    <property type="term" value="P:cytoplasmic translation"/>
    <property type="evidence" value="ECO:0000266"/>
    <property type="project" value="PomBase"/>
</dbReference>
<dbReference type="GO" id="GO:0042254">
    <property type="term" value="P:ribosome biogenesis"/>
    <property type="evidence" value="ECO:0000266"/>
    <property type="project" value="PomBase"/>
</dbReference>
<dbReference type="InterPro" id="IPR006846">
    <property type="entry name" value="Ribosomal_eS30"/>
</dbReference>
<dbReference type="PANTHER" id="PTHR12650">
    <property type="entry name" value="40S RIBOSOMAL PROTEIN S30/UBIQUITIN-LIKE PROTEIN FUBI"/>
    <property type="match status" value="1"/>
</dbReference>
<dbReference type="PANTHER" id="PTHR12650:SF15">
    <property type="entry name" value="RIBOSOMAL PROTEIN S30, ISOFORM A"/>
    <property type="match status" value="1"/>
</dbReference>
<dbReference type="Pfam" id="PF04758">
    <property type="entry name" value="Ribosomal_S30"/>
    <property type="match status" value="1"/>
</dbReference>
<protein>
    <recommendedName>
        <fullName evidence="4">Small ribosomal subunit protein eS30B</fullName>
    </recommendedName>
    <alternativeName>
        <fullName>40S ribosomal protein S30-B</fullName>
    </alternativeName>
</protein>
<gene>
    <name type="primary">rps3002</name>
    <name type="synonym">rps30b</name>
    <name type="ORF">SPBC19G7.03c</name>
</gene>
<reference key="1">
    <citation type="journal article" date="2002" name="Nature">
        <title>The genome sequence of Schizosaccharomyces pombe.</title>
        <authorList>
            <person name="Wood V."/>
            <person name="Gwilliam R."/>
            <person name="Rajandream M.A."/>
            <person name="Lyne M.H."/>
            <person name="Lyne R."/>
            <person name="Stewart A."/>
            <person name="Sgouros J.G."/>
            <person name="Peat N."/>
            <person name="Hayles J."/>
            <person name="Baker S.G."/>
            <person name="Basham D."/>
            <person name="Bowman S."/>
            <person name="Brooks K."/>
            <person name="Brown D."/>
            <person name="Brown S."/>
            <person name="Chillingworth T."/>
            <person name="Churcher C.M."/>
            <person name="Collins M."/>
            <person name="Connor R."/>
            <person name="Cronin A."/>
            <person name="Davis P."/>
            <person name="Feltwell T."/>
            <person name="Fraser A."/>
            <person name="Gentles S."/>
            <person name="Goble A."/>
            <person name="Hamlin N."/>
            <person name="Harris D.E."/>
            <person name="Hidalgo J."/>
            <person name="Hodgson G."/>
            <person name="Holroyd S."/>
            <person name="Hornsby T."/>
            <person name="Howarth S."/>
            <person name="Huckle E.J."/>
            <person name="Hunt S."/>
            <person name="Jagels K."/>
            <person name="James K.D."/>
            <person name="Jones L."/>
            <person name="Jones M."/>
            <person name="Leather S."/>
            <person name="McDonald S."/>
            <person name="McLean J."/>
            <person name="Mooney P."/>
            <person name="Moule S."/>
            <person name="Mungall K.L."/>
            <person name="Murphy L.D."/>
            <person name="Niblett D."/>
            <person name="Odell C."/>
            <person name="Oliver K."/>
            <person name="O'Neil S."/>
            <person name="Pearson D."/>
            <person name="Quail M.A."/>
            <person name="Rabbinowitsch E."/>
            <person name="Rutherford K.M."/>
            <person name="Rutter S."/>
            <person name="Saunders D."/>
            <person name="Seeger K."/>
            <person name="Sharp S."/>
            <person name="Skelton J."/>
            <person name="Simmonds M.N."/>
            <person name="Squares R."/>
            <person name="Squares S."/>
            <person name="Stevens K."/>
            <person name="Taylor K."/>
            <person name="Taylor R.G."/>
            <person name="Tivey A."/>
            <person name="Walsh S.V."/>
            <person name="Warren T."/>
            <person name="Whitehead S."/>
            <person name="Woodward J.R."/>
            <person name="Volckaert G."/>
            <person name="Aert R."/>
            <person name="Robben J."/>
            <person name="Grymonprez B."/>
            <person name="Weltjens I."/>
            <person name="Vanstreels E."/>
            <person name="Rieger M."/>
            <person name="Schaefer M."/>
            <person name="Mueller-Auer S."/>
            <person name="Gabel C."/>
            <person name="Fuchs M."/>
            <person name="Duesterhoeft A."/>
            <person name="Fritzc C."/>
            <person name="Holzer E."/>
            <person name="Moestl D."/>
            <person name="Hilbert H."/>
            <person name="Borzym K."/>
            <person name="Langer I."/>
            <person name="Beck A."/>
            <person name="Lehrach H."/>
            <person name="Reinhardt R."/>
            <person name="Pohl T.M."/>
            <person name="Eger P."/>
            <person name="Zimmermann W."/>
            <person name="Wedler H."/>
            <person name="Wambutt R."/>
            <person name="Purnelle B."/>
            <person name="Goffeau A."/>
            <person name="Cadieu E."/>
            <person name="Dreano S."/>
            <person name="Gloux S."/>
            <person name="Lelaure V."/>
            <person name="Mottier S."/>
            <person name="Galibert F."/>
            <person name="Aves S.J."/>
            <person name="Xiang Z."/>
            <person name="Hunt C."/>
            <person name="Moore K."/>
            <person name="Hurst S.M."/>
            <person name="Lucas M."/>
            <person name="Rochet M."/>
            <person name="Gaillardin C."/>
            <person name="Tallada V.A."/>
            <person name="Garzon A."/>
            <person name="Thode G."/>
            <person name="Daga R.R."/>
            <person name="Cruzado L."/>
            <person name="Jimenez J."/>
            <person name="Sanchez M."/>
            <person name="del Rey F."/>
            <person name="Benito J."/>
            <person name="Dominguez A."/>
            <person name="Revuelta J.L."/>
            <person name="Moreno S."/>
            <person name="Armstrong J."/>
            <person name="Forsburg S.L."/>
            <person name="Cerutti L."/>
            <person name="Lowe T."/>
            <person name="McCombie W.R."/>
            <person name="Paulsen I."/>
            <person name="Potashkin J."/>
            <person name="Shpakovski G.V."/>
            <person name="Ussery D."/>
            <person name="Barrell B.G."/>
            <person name="Nurse P."/>
        </authorList>
    </citation>
    <scope>NUCLEOTIDE SEQUENCE [LARGE SCALE GENOMIC DNA]</scope>
    <source>
        <strain>972 / ATCC 24843</strain>
    </source>
</reference>
<reference key="2">
    <citation type="journal article" date="2006" name="Nat. Biotechnol.">
        <title>ORFeome cloning and global analysis of protein localization in the fission yeast Schizosaccharomyces pombe.</title>
        <authorList>
            <person name="Matsuyama A."/>
            <person name="Arai R."/>
            <person name="Yashiroda Y."/>
            <person name="Shirai A."/>
            <person name="Kamata A."/>
            <person name="Sekido S."/>
            <person name="Kobayashi Y."/>
            <person name="Hashimoto A."/>
            <person name="Hamamoto M."/>
            <person name="Hiraoka Y."/>
            <person name="Horinouchi S."/>
            <person name="Yoshida M."/>
        </authorList>
    </citation>
    <scope>SUBCELLULAR LOCATION [LARGE SCALE ANALYSIS]</scope>
</reference>
<name>RS30B_SCHPO</name>
<comment type="function">
    <text evidence="1">Component of the ribosome, a large ribonucleoprotein complex responsible for the synthesis of proteins in the cell. The small ribosomal subunit (SSU) binds messenger RNAs (mRNAs) and translates the encoded message by selecting cognate aminoacyl-transfer RNA (tRNA) molecules. The large subunit (LSU) contains the ribosomal catalytic site termed the peptidyl transferase center (PTC), which catalyzes the formation of peptide bonds, thereby polymerizing the amino acids delivered by tRNAs into a polypeptide chain. The nascent polypeptides leave the ribosome through a tunnel in the LSU and interact with protein factors that function in enzymatic processing, targeting, and the membrane insertion of nascent chains at the exit of the ribosomal tunnel.</text>
</comment>
<comment type="subunit">
    <text evidence="1">Component of the small ribosomal subunit (SSU). Mature yeast ribosomes consist of a small (40S) and a large (60S) subunit. The 40S small subunit contains 1 molecule of ribosomal RNA (18S rRNA) and at least 33 different proteins. The large 60S subunit contains 3 rRNA molecules (25S, 5.8S and 5S rRNA) and at least 46 different proteins.</text>
</comment>
<comment type="subcellular location">
    <subcellularLocation>
        <location evidence="3">Cytoplasm</location>
    </subcellularLocation>
</comment>
<comment type="miscellaneous">
    <text>There are 2 genes for eS30 in S.pombe.</text>
</comment>
<comment type="similarity">
    <text evidence="4">Belongs to the eukaryotic ribosomal protein eS30 family.</text>
</comment>
<feature type="chain" id="PRO_0000433420" description="Small ribosomal subunit protein eS30B">
    <location>
        <begin position="1"/>
        <end position="61"/>
    </location>
</feature>
<feature type="region of interest" description="Disordered" evidence="2">
    <location>
        <begin position="1"/>
        <end position="36"/>
    </location>
</feature>
<evidence type="ECO:0000250" key="1">
    <source>
        <dbReference type="UniProtKB" id="P0CX34"/>
    </source>
</evidence>
<evidence type="ECO:0000256" key="2">
    <source>
        <dbReference type="SAM" id="MobiDB-lite"/>
    </source>
</evidence>
<evidence type="ECO:0000269" key="3">
    <source>
    </source>
</evidence>
<evidence type="ECO:0000305" key="4"/>
<accession>P0CT63</accession>
<accession>O14314</accession>
<accession>O42952</accession>
<proteinExistence type="evidence at protein level"/>
<sequence>MGKVHGSLARAGKVKSQTPKVEKQEKPKQPKGRAYKRLLYVRRFVNVTNMVGGKRRMNPSS</sequence>